<comment type="function">
    <text evidence="1">Involved in disulfide-bond formation. Acts by transferring its disulfide bond to other proteins (By similarity).</text>
</comment>
<comment type="subcellular location">
    <subcellularLocation>
        <location evidence="1">Periplasm</location>
    </subcellularLocation>
</comment>
<comment type="similarity">
    <text evidence="4">Belongs to the thioredoxin family. DsbA subfamily.</text>
</comment>
<sequence>MRNLILTAMLAMASLFGMAAQADDYTAGKEYVELSSPVPVSQPGKIEVVELFWYGCPHCYAFEPTIVPWSEKLPADVHFVRLPALFGGIWNVHGQMFLTLESMGVEHDVHNAVFEAIHKEHKKLATPEEMADFLAGKGVDKEKFLSTYNSFAIKGQMEKAKKLAMAYQVTGVPTMVVNGKYRFDIGSAGGPEETLKLADYLIEKERAAAKK</sequence>
<accession>Q02DM0</accession>
<accession>P95460</accession>
<feature type="signal peptide" evidence="2">
    <location>
        <begin position="1"/>
        <end position="22"/>
    </location>
</feature>
<feature type="chain" id="PRO_0000271730" description="Thiol:disulfide interchange protein DsbA">
    <location>
        <begin position="23"/>
        <end position="211"/>
    </location>
</feature>
<feature type="domain" description="Thioredoxin" evidence="3">
    <location>
        <begin position="23"/>
        <end position="203"/>
    </location>
</feature>
<feature type="disulfide bond" description="Redox-active" evidence="3">
    <location>
        <begin position="56"/>
        <end position="59"/>
    </location>
</feature>
<feature type="sequence conflict" description="In Ref. 1." evidence="4" ref="1">
    <location>
        <position position="209"/>
    </location>
</feature>
<organism>
    <name type="scientific">Pseudomonas aeruginosa (strain UCBPP-PA14)</name>
    <dbReference type="NCBI Taxonomy" id="208963"/>
    <lineage>
        <taxon>Bacteria</taxon>
        <taxon>Pseudomonadati</taxon>
        <taxon>Pseudomonadota</taxon>
        <taxon>Gammaproteobacteria</taxon>
        <taxon>Pseudomonadales</taxon>
        <taxon>Pseudomonadaceae</taxon>
        <taxon>Pseudomonas</taxon>
    </lineage>
</organism>
<reference key="1">
    <citation type="journal article" date="1999" name="Proc. Natl. Acad. Sci. U.S.A.">
        <title>Pseudomonas aeruginosa killing of Caenorhabditis elegans used to identify P. aeruginosa virulence factors.</title>
        <authorList>
            <person name="Tan M.-W."/>
            <person name="Rahme L.G."/>
            <person name="Sternberg J.A."/>
            <person name="Tompkins R.G."/>
            <person name="Ausubel F.M."/>
        </authorList>
    </citation>
    <scope>NUCLEOTIDE SEQUENCE [GENOMIC DNA]</scope>
</reference>
<reference key="2">
    <citation type="journal article" date="2006" name="Genome Biol.">
        <title>Genomic analysis reveals that Pseudomonas aeruginosa virulence is combinatorial.</title>
        <authorList>
            <person name="Lee D.G."/>
            <person name="Urbach J.M."/>
            <person name="Wu G."/>
            <person name="Liberati N.T."/>
            <person name="Feinbaum R.L."/>
            <person name="Miyata S."/>
            <person name="Diggins L.T."/>
            <person name="He J."/>
            <person name="Saucier M."/>
            <person name="Deziel E."/>
            <person name="Friedman L."/>
            <person name="Li L."/>
            <person name="Grills G."/>
            <person name="Montgomery K."/>
            <person name="Kucherlapati R."/>
            <person name="Rahme L.G."/>
            <person name="Ausubel F.M."/>
        </authorList>
    </citation>
    <scope>NUCLEOTIDE SEQUENCE [LARGE SCALE GENOMIC DNA]</scope>
    <source>
        <strain>UCBPP-PA14</strain>
    </source>
</reference>
<keyword id="KW-1015">Disulfide bond</keyword>
<keyword id="KW-0574">Periplasm</keyword>
<keyword id="KW-0676">Redox-active center</keyword>
<keyword id="KW-0732">Signal</keyword>
<evidence type="ECO:0000250" key="1"/>
<evidence type="ECO:0000255" key="2"/>
<evidence type="ECO:0000255" key="3">
    <source>
        <dbReference type="PROSITE-ProRule" id="PRU00691"/>
    </source>
</evidence>
<evidence type="ECO:0000305" key="4"/>
<proteinExistence type="inferred from homology"/>
<gene>
    <name type="primary">dsbA</name>
    <name type="ordered locus">PA14_72450</name>
</gene>
<dbReference type="EMBL" id="AF116282">
    <property type="protein sequence ID" value="AAD22452.1"/>
    <property type="molecule type" value="Genomic_DNA"/>
</dbReference>
<dbReference type="EMBL" id="CP000438">
    <property type="protein sequence ID" value="ABJ14875.1"/>
    <property type="molecule type" value="Genomic_DNA"/>
</dbReference>
<dbReference type="RefSeq" id="WP_003096976.1">
    <property type="nucleotide sequence ID" value="NZ_CP034244.1"/>
</dbReference>
<dbReference type="BMRB" id="Q02DM0"/>
<dbReference type="SMR" id="Q02DM0"/>
<dbReference type="KEGG" id="pau:PA14_72450"/>
<dbReference type="PseudoCAP" id="PA14_72450"/>
<dbReference type="HOGENOM" id="CLU_088255_1_0_6"/>
<dbReference type="BioCyc" id="PAER208963:G1G74-6095-MONOMER"/>
<dbReference type="Proteomes" id="UP000000653">
    <property type="component" value="Chromosome"/>
</dbReference>
<dbReference type="GO" id="GO:0042597">
    <property type="term" value="C:periplasmic space"/>
    <property type="evidence" value="ECO:0007669"/>
    <property type="project" value="UniProtKB-SubCell"/>
</dbReference>
<dbReference type="GO" id="GO:0015036">
    <property type="term" value="F:disulfide oxidoreductase activity"/>
    <property type="evidence" value="ECO:0007669"/>
    <property type="project" value="UniProtKB-ARBA"/>
</dbReference>
<dbReference type="CDD" id="cd03019">
    <property type="entry name" value="DsbA_DsbA"/>
    <property type="match status" value="1"/>
</dbReference>
<dbReference type="Gene3D" id="3.40.30.10">
    <property type="entry name" value="Glutaredoxin"/>
    <property type="match status" value="1"/>
</dbReference>
<dbReference type="InterPro" id="IPR001853">
    <property type="entry name" value="DSBA-like_thioredoxin_dom"/>
</dbReference>
<dbReference type="InterPro" id="IPR023205">
    <property type="entry name" value="DsbA/DsbL"/>
</dbReference>
<dbReference type="InterPro" id="IPR050824">
    <property type="entry name" value="Thiol_disulfide_DsbA"/>
</dbReference>
<dbReference type="InterPro" id="IPR036249">
    <property type="entry name" value="Thioredoxin-like_sf"/>
</dbReference>
<dbReference type="InterPro" id="IPR017937">
    <property type="entry name" value="Thioredoxin_CS"/>
</dbReference>
<dbReference type="InterPro" id="IPR013766">
    <property type="entry name" value="Thioredoxin_domain"/>
</dbReference>
<dbReference type="PANTHER" id="PTHR35891">
    <property type="entry name" value="THIOL:DISULFIDE INTERCHANGE PROTEIN DSBA"/>
    <property type="match status" value="1"/>
</dbReference>
<dbReference type="PANTHER" id="PTHR35891:SF2">
    <property type="entry name" value="THIOL:DISULFIDE INTERCHANGE PROTEIN DSBA"/>
    <property type="match status" value="1"/>
</dbReference>
<dbReference type="Pfam" id="PF01323">
    <property type="entry name" value="DSBA"/>
    <property type="match status" value="1"/>
</dbReference>
<dbReference type="PIRSF" id="PIRSF001488">
    <property type="entry name" value="Tdi_protein"/>
    <property type="match status" value="1"/>
</dbReference>
<dbReference type="SUPFAM" id="SSF52833">
    <property type="entry name" value="Thioredoxin-like"/>
    <property type="match status" value="1"/>
</dbReference>
<dbReference type="PROSITE" id="PS00194">
    <property type="entry name" value="THIOREDOXIN_1"/>
    <property type="match status" value="1"/>
</dbReference>
<dbReference type="PROSITE" id="PS51352">
    <property type="entry name" value="THIOREDOXIN_2"/>
    <property type="match status" value="1"/>
</dbReference>
<protein>
    <recommendedName>
        <fullName>Thiol:disulfide interchange protein DsbA</fullName>
    </recommendedName>
</protein>
<name>DSBA_PSEAB</name>